<protein>
    <recommendedName>
        <fullName evidence="1">Large ribosomal subunit protein bL27</fullName>
    </recommendedName>
    <alternativeName>
        <fullName evidence="3">50S ribosomal protein L27</fullName>
    </alternativeName>
</protein>
<keyword id="KW-1185">Reference proteome</keyword>
<keyword id="KW-0687">Ribonucleoprotein</keyword>
<keyword id="KW-0689">Ribosomal protein</keyword>
<organism>
    <name type="scientific">Bradyrhizobium diazoefficiens (strain JCM 10833 / BCRC 13528 / IAM 13628 / NBRC 14792 / USDA 110)</name>
    <dbReference type="NCBI Taxonomy" id="224911"/>
    <lineage>
        <taxon>Bacteria</taxon>
        <taxon>Pseudomonadati</taxon>
        <taxon>Pseudomonadota</taxon>
        <taxon>Alphaproteobacteria</taxon>
        <taxon>Hyphomicrobiales</taxon>
        <taxon>Nitrobacteraceae</taxon>
        <taxon>Bradyrhizobium</taxon>
    </lineage>
</organism>
<name>RL27_BRADU</name>
<evidence type="ECO:0000255" key="1">
    <source>
        <dbReference type="HAMAP-Rule" id="MF_00539"/>
    </source>
</evidence>
<evidence type="ECO:0000256" key="2">
    <source>
        <dbReference type="SAM" id="MobiDB-lite"/>
    </source>
</evidence>
<evidence type="ECO:0000305" key="3"/>
<accession>Q89X93</accession>
<proteinExistence type="inferred from homology"/>
<feature type="chain" id="PRO_0000181055" description="Large ribosomal subunit protein bL27">
    <location>
        <begin position="1"/>
        <end position="89"/>
    </location>
</feature>
<feature type="region of interest" description="Disordered" evidence="2">
    <location>
        <begin position="1"/>
        <end position="21"/>
    </location>
</feature>
<sequence>MAHKKAGGSSRNGRDSKGKRLGIKAFGGEVVIPGNIIARQRGTTWHPGLNVGMGTDHTLFAKIEGRVTFQAKANGRTFVSVLPIAEAAE</sequence>
<comment type="similarity">
    <text evidence="1">Belongs to the bacterial ribosomal protein bL27 family.</text>
</comment>
<reference key="1">
    <citation type="journal article" date="2002" name="DNA Res.">
        <title>Complete genomic sequence of nitrogen-fixing symbiotic bacterium Bradyrhizobium japonicum USDA110.</title>
        <authorList>
            <person name="Kaneko T."/>
            <person name="Nakamura Y."/>
            <person name="Sato S."/>
            <person name="Minamisawa K."/>
            <person name="Uchiumi T."/>
            <person name="Sasamoto S."/>
            <person name="Watanabe A."/>
            <person name="Idesawa K."/>
            <person name="Iriguchi M."/>
            <person name="Kawashima K."/>
            <person name="Kohara M."/>
            <person name="Matsumoto M."/>
            <person name="Shimpo S."/>
            <person name="Tsuruoka H."/>
            <person name="Wada T."/>
            <person name="Yamada M."/>
            <person name="Tabata S."/>
        </authorList>
    </citation>
    <scope>NUCLEOTIDE SEQUENCE [LARGE SCALE GENOMIC DNA]</scope>
    <source>
        <strain>JCM 10833 / BCRC 13528 / IAM 13628 / NBRC 14792 / USDA 110</strain>
    </source>
</reference>
<gene>
    <name evidence="1" type="primary">rpmA</name>
    <name type="ordered locus">bsr0421</name>
</gene>
<dbReference type="EMBL" id="BA000040">
    <property type="protein sequence ID" value="BAC45686.1"/>
    <property type="molecule type" value="Genomic_DNA"/>
</dbReference>
<dbReference type="RefSeq" id="NP_767061.1">
    <property type="nucleotide sequence ID" value="NC_004463.1"/>
</dbReference>
<dbReference type="RefSeq" id="WP_011083253.1">
    <property type="nucleotide sequence ID" value="NZ_CP011360.1"/>
</dbReference>
<dbReference type="SMR" id="Q89X93"/>
<dbReference type="FunCoup" id="Q89X93">
    <property type="interactions" value="680"/>
</dbReference>
<dbReference type="STRING" id="224911.AAV28_41355"/>
<dbReference type="EnsemblBacteria" id="BAC45686">
    <property type="protein sequence ID" value="BAC45686"/>
    <property type="gene ID" value="BAC45686"/>
</dbReference>
<dbReference type="GeneID" id="64065919"/>
<dbReference type="KEGG" id="bja:bsr0421"/>
<dbReference type="PATRIC" id="fig|224911.44.peg.8951"/>
<dbReference type="eggNOG" id="COG0211">
    <property type="taxonomic scope" value="Bacteria"/>
</dbReference>
<dbReference type="HOGENOM" id="CLU_095424_4_1_5"/>
<dbReference type="InParanoid" id="Q89X93"/>
<dbReference type="OrthoDB" id="9803474at2"/>
<dbReference type="PhylomeDB" id="Q89X93"/>
<dbReference type="Proteomes" id="UP000002526">
    <property type="component" value="Chromosome"/>
</dbReference>
<dbReference type="GO" id="GO:0022625">
    <property type="term" value="C:cytosolic large ribosomal subunit"/>
    <property type="evidence" value="ECO:0000318"/>
    <property type="project" value="GO_Central"/>
</dbReference>
<dbReference type="GO" id="GO:0003735">
    <property type="term" value="F:structural constituent of ribosome"/>
    <property type="evidence" value="ECO:0000318"/>
    <property type="project" value="GO_Central"/>
</dbReference>
<dbReference type="GO" id="GO:0006412">
    <property type="term" value="P:translation"/>
    <property type="evidence" value="ECO:0007669"/>
    <property type="project" value="UniProtKB-UniRule"/>
</dbReference>
<dbReference type="FunFam" id="2.40.50.100:FF:000061">
    <property type="entry name" value="50S ribosomal protein L27"/>
    <property type="match status" value="1"/>
</dbReference>
<dbReference type="Gene3D" id="2.40.50.100">
    <property type="match status" value="1"/>
</dbReference>
<dbReference type="HAMAP" id="MF_00539">
    <property type="entry name" value="Ribosomal_bL27"/>
    <property type="match status" value="1"/>
</dbReference>
<dbReference type="InterPro" id="IPR001684">
    <property type="entry name" value="Ribosomal_bL27"/>
</dbReference>
<dbReference type="InterPro" id="IPR018261">
    <property type="entry name" value="Ribosomal_bL27_CS"/>
</dbReference>
<dbReference type="NCBIfam" id="TIGR00062">
    <property type="entry name" value="L27"/>
    <property type="match status" value="1"/>
</dbReference>
<dbReference type="PANTHER" id="PTHR15893:SF0">
    <property type="entry name" value="LARGE RIBOSOMAL SUBUNIT PROTEIN BL27M"/>
    <property type="match status" value="1"/>
</dbReference>
<dbReference type="PANTHER" id="PTHR15893">
    <property type="entry name" value="RIBOSOMAL PROTEIN L27"/>
    <property type="match status" value="1"/>
</dbReference>
<dbReference type="Pfam" id="PF01016">
    <property type="entry name" value="Ribosomal_L27"/>
    <property type="match status" value="1"/>
</dbReference>
<dbReference type="PRINTS" id="PR00063">
    <property type="entry name" value="RIBOSOMALL27"/>
</dbReference>
<dbReference type="SUPFAM" id="SSF110324">
    <property type="entry name" value="Ribosomal L27 protein-like"/>
    <property type="match status" value="1"/>
</dbReference>
<dbReference type="PROSITE" id="PS00831">
    <property type="entry name" value="RIBOSOMAL_L27"/>
    <property type="match status" value="1"/>
</dbReference>